<keyword id="KW-0274">FAD</keyword>
<keyword id="KW-0285">Flavoprotein</keyword>
<keyword id="KW-0472">Membrane</keyword>
<keyword id="KW-0496">Mitochondrion</keyword>
<keyword id="KW-1000">Mitochondrion outer membrane</keyword>
<keyword id="KW-0503">Monooxygenase</keyword>
<keyword id="KW-0521">NADP</keyword>
<keyword id="KW-0560">Oxidoreductase</keyword>
<keyword id="KW-0662">Pyridine nucleotide biosynthesis</keyword>
<keyword id="KW-1185">Reference proteome</keyword>
<reference key="1">
    <citation type="journal article" date="2015" name="Genome Announc.">
        <title>Draft genome sequence of the cellulolytic fungus Chaetomium globosum.</title>
        <authorList>
            <person name="Cuomo C.A."/>
            <person name="Untereiner W.A."/>
            <person name="Ma L.-J."/>
            <person name="Grabherr M."/>
            <person name="Birren B.W."/>
        </authorList>
    </citation>
    <scope>NUCLEOTIDE SEQUENCE [LARGE SCALE GENOMIC DNA]</scope>
    <source>
        <strain>ATCC 6205 / CBS 148.51 / DSM 1962 / NBRC 6347 / NRRL 1970</strain>
    </source>
</reference>
<gene>
    <name evidence="1" type="primary">BNA4</name>
    <name type="ORF">CHGG_09786</name>
</gene>
<proteinExistence type="inferred from homology"/>
<protein>
    <recommendedName>
        <fullName evidence="1">Kynurenine 3-monooxygenase</fullName>
        <ecNumber evidence="1">1.14.13.9</ecNumber>
    </recommendedName>
    <alternativeName>
        <fullName evidence="1">Biosynthesis of nicotinic acid protein 4</fullName>
    </alternativeName>
    <alternativeName>
        <fullName evidence="1">Kynurenine 3-hydroxylase</fullName>
    </alternativeName>
</protein>
<dbReference type="EC" id="1.14.13.9" evidence="1"/>
<dbReference type="EMBL" id="CH408035">
    <property type="protein sequence ID" value="EAQ83382.1"/>
    <property type="molecule type" value="Genomic_DNA"/>
</dbReference>
<dbReference type="RefSeq" id="XP_001227713.1">
    <property type="nucleotide sequence ID" value="XM_001227712.1"/>
</dbReference>
<dbReference type="SMR" id="Q2GQG8"/>
<dbReference type="FunCoup" id="Q2GQG8">
    <property type="interactions" value="677"/>
</dbReference>
<dbReference type="STRING" id="306901.Q2GQG8"/>
<dbReference type="GeneID" id="4397066"/>
<dbReference type="VEuPathDB" id="FungiDB:CHGG_09786"/>
<dbReference type="eggNOG" id="KOG2614">
    <property type="taxonomic scope" value="Eukaryota"/>
</dbReference>
<dbReference type="HOGENOM" id="CLU_023210_2_1_1"/>
<dbReference type="InParanoid" id="Q2GQG8"/>
<dbReference type="OMA" id="REFMFIA"/>
<dbReference type="OrthoDB" id="10053569at2759"/>
<dbReference type="UniPathway" id="UPA00253">
    <property type="reaction ID" value="UER00328"/>
</dbReference>
<dbReference type="Proteomes" id="UP000001056">
    <property type="component" value="Unassembled WGS sequence"/>
</dbReference>
<dbReference type="GO" id="GO:0005741">
    <property type="term" value="C:mitochondrial outer membrane"/>
    <property type="evidence" value="ECO:0007669"/>
    <property type="project" value="UniProtKB-SubCell"/>
</dbReference>
<dbReference type="GO" id="GO:0071949">
    <property type="term" value="F:FAD binding"/>
    <property type="evidence" value="ECO:0007669"/>
    <property type="project" value="InterPro"/>
</dbReference>
<dbReference type="GO" id="GO:0004502">
    <property type="term" value="F:kynurenine 3-monooxygenase activity"/>
    <property type="evidence" value="ECO:0007669"/>
    <property type="project" value="UniProtKB-UniRule"/>
</dbReference>
<dbReference type="GO" id="GO:0034354">
    <property type="term" value="P:'de novo' NAD biosynthetic process from L-tryptophan"/>
    <property type="evidence" value="ECO:0007669"/>
    <property type="project" value="UniProtKB-UniRule"/>
</dbReference>
<dbReference type="GO" id="GO:0043420">
    <property type="term" value="P:anthranilate metabolic process"/>
    <property type="evidence" value="ECO:0007669"/>
    <property type="project" value="UniProtKB-UniRule"/>
</dbReference>
<dbReference type="GO" id="GO:0070189">
    <property type="term" value="P:kynurenine metabolic process"/>
    <property type="evidence" value="ECO:0007669"/>
    <property type="project" value="TreeGrafter"/>
</dbReference>
<dbReference type="GO" id="GO:0006569">
    <property type="term" value="P:L-tryptophan catabolic process"/>
    <property type="evidence" value="ECO:0007669"/>
    <property type="project" value="UniProtKB-UniRule"/>
</dbReference>
<dbReference type="GO" id="GO:0019805">
    <property type="term" value="P:quinolinate biosynthetic process"/>
    <property type="evidence" value="ECO:0007669"/>
    <property type="project" value="UniProtKB-UniRule"/>
</dbReference>
<dbReference type="FunFam" id="3.50.50.60:FF:000129">
    <property type="entry name" value="Kynurenine 3-monooxygenase"/>
    <property type="match status" value="1"/>
</dbReference>
<dbReference type="Gene3D" id="3.50.50.60">
    <property type="entry name" value="FAD/NAD(P)-binding domain"/>
    <property type="match status" value="1"/>
</dbReference>
<dbReference type="HAMAP" id="MF_01971">
    <property type="entry name" value="Kynurenine_monooxygenase"/>
    <property type="match status" value="1"/>
</dbReference>
<dbReference type="InterPro" id="IPR002938">
    <property type="entry name" value="FAD-bd"/>
</dbReference>
<dbReference type="InterPro" id="IPR036188">
    <property type="entry name" value="FAD/NAD-bd_sf"/>
</dbReference>
<dbReference type="InterPro" id="IPR027545">
    <property type="entry name" value="Kynurenine_monooxygenase"/>
</dbReference>
<dbReference type="PANTHER" id="PTHR46028">
    <property type="entry name" value="KYNURENINE 3-MONOOXYGENASE"/>
    <property type="match status" value="1"/>
</dbReference>
<dbReference type="PANTHER" id="PTHR46028:SF2">
    <property type="entry name" value="KYNURENINE 3-MONOOXYGENASE"/>
    <property type="match status" value="1"/>
</dbReference>
<dbReference type="Pfam" id="PF01494">
    <property type="entry name" value="FAD_binding_3"/>
    <property type="match status" value="1"/>
</dbReference>
<dbReference type="PRINTS" id="PR00420">
    <property type="entry name" value="RNGMNOXGNASE"/>
</dbReference>
<dbReference type="SUPFAM" id="SSF51905">
    <property type="entry name" value="FAD/NAD(P)-binding domain"/>
    <property type="match status" value="1"/>
</dbReference>
<name>KMO_CHAGB</name>
<accession>Q2GQG8</accession>
<feature type="chain" id="PRO_0000361925" description="Kynurenine 3-monooxygenase">
    <location>
        <begin position="1"/>
        <end position="479"/>
    </location>
</feature>
<comment type="function">
    <text evidence="1">Catalyzes the hydroxylation of L-kynurenine (L-Kyn) to form 3-hydroxy-L-kynurenine (L-3OHKyn). Required for synthesis of quinolinic acid.</text>
</comment>
<comment type="catalytic activity">
    <reaction evidence="1">
        <text>L-kynurenine + NADPH + O2 + H(+) = 3-hydroxy-L-kynurenine + NADP(+) + H2O</text>
        <dbReference type="Rhea" id="RHEA:20545"/>
        <dbReference type="ChEBI" id="CHEBI:15377"/>
        <dbReference type="ChEBI" id="CHEBI:15378"/>
        <dbReference type="ChEBI" id="CHEBI:15379"/>
        <dbReference type="ChEBI" id="CHEBI:57783"/>
        <dbReference type="ChEBI" id="CHEBI:57959"/>
        <dbReference type="ChEBI" id="CHEBI:58125"/>
        <dbReference type="ChEBI" id="CHEBI:58349"/>
        <dbReference type="EC" id="1.14.13.9"/>
    </reaction>
</comment>
<comment type="cofactor">
    <cofactor evidence="1">
        <name>FAD</name>
        <dbReference type="ChEBI" id="CHEBI:57692"/>
    </cofactor>
</comment>
<comment type="pathway">
    <text evidence="1">Cofactor biosynthesis; NAD(+) biosynthesis; quinolinate from L-kynurenine: step 1/3.</text>
</comment>
<comment type="subcellular location">
    <subcellularLocation>
        <location evidence="1">Mitochondrion outer membrane</location>
    </subcellularLocation>
</comment>
<comment type="similarity">
    <text evidence="1">Belongs to the aromatic-ring hydroxylase family. KMO subfamily.</text>
</comment>
<evidence type="ECO:0000255" key="1">
    <source>
        <dbReference type="HAMAP-Rule" id="MF_03018"/>
    </source>
</evidence>
<sequence>MEKKQKVVVVGAGPVGSLAALYAANRGDDVEIYELRSDLRDPTTTPLNFTKSINLALSERGINAMRHAGQPKLIEHVMGATIPMHGRMIHGKRANGDLFEESQNYDVYGRSILAVDRGRLNERLLDILEAMPNVTFFFNHKLTGADFRKNKAWFEVRDKTGAAQGQQSREIEVKFDLMIGTDGAHSAVRYHMMKYTRMDYEQVYIDTMWCEFQIQPKTVVPDAPLDSKFSISPNHLHIWPGKEFMFIAIPSDDGSFTCTLFAPATLYEHLESDRTGSLVPPFFDKYFPGVTTLIPPTELIDSFHRNPHLPLISIKCKPHHYGSSVVILGDAAHAMVPFYGQGMNAGLEDVRILFDILDKHARMDELSACADRAVSREHALAEYTAVRVPDAHAINDLALQNYVEMRASVLSPVYRLRKFLEEALSKYVPSLGWQTKYARVSFGNERYSEVVAKSEHQGKMLVRGIGILSCRVGRALHNE</sequence>
<organism>
    <name type="scientific">Chaetomium globosum (strain ATCC 6205 / CBS 148.51 / DSM 1962 / NBRC 6347 / NRRL 1970)</name>
    <name type="common">Soil fungus</name>
    <dbReference type="NCBI Taxonomy" id="306901"/>
    <lineage>
        <taxon>Eukaryota</taxon>
        <taxon>Fungi</taxon>
        <taxon>Dikarya</taxon>
        <taxon>Ascomycota</taxon>
        <taxon>Pezizomycotina</taxon>
        <taxon>Sordariomycetes</taxon>
        <taxon>Sordariomycetidae</taxon>
        <taxon>Sordariales</taxon>
        <taxon>Chaetomiaceae</taxon>
        <taxon>Chaetomium</taxon>
    </lineage>
</organism>